<name>LRAD3_XENTR</name>
<feature type="signal peptide" evidence="3">
    <location>
        <begin position="1"/>
        <end position="13"/>
    </location>
</feature>
<feature type="chain" id="PRO_0000299380" description="Low-density lipoprotein receptor class A domain-containing protein 3">
    <location>
        <begin position="14"/>
        <end position="337"/>
    </location>
</feature>
<feature type="topological domain" description="Extracellular" evidence="3">
    <location>
        <begin position="14"/>
        <end position="169"/>
    </location>
</feature>
<feature type="transmembrane region" description="Helical" evidence="3">
    <location>
        <begin position="170"/>
        <end position="190"/>
    </location>
</feature>
<feature type="topological domain" description="Cytoplasmic" evidence="3">
    <location>
        <begin position="191"/>
        <end position="337"/>
    </location>
</feature>
<feature type="domain" description="LDL-receptor class A 1" evidence="4">
    <location>
        <begin position="24"/>
        <end position="61"/>
    </location>
</feature>
<feature type="domain" description="LDL-receptor class A 2" evidence="4">
    <location>
        <begin position="66"/>
        <end position="103"/>
    </location>
</feature>
<feature type="domain" description="LDL-receptor class A 3" evidence="4">
    <location>
        <begin position="108"/>
        <end position="144"/>
    </location>
</feature>
<feature type="region of interest" description="Disordered" evidence="5">
    <location>
        <begin position="243"/>
        <end position="337"/>
    </location>
</feature>
<feature type="compositionally biased region" description="Polar residues" evidence="5">
    <location>
        <begin position="243"/>
        <end position="253"/>
    </location>
</feature>
<feature type="compositionally biased region" description="Low complexity" evidence="5">
    <location>
        <begin position="291"/>
        <end position="303"/>
    </location>
</feature>
<feature type="glycosylation site" description="N-linked (GlcNAc...) asparagine" evidence="3">
    <location>
        <position position="20"/>
    </location>
</feature>
<feature type="glycosylation site" description="N-linked (GlcNAc...) asparagine" evidence="3">
    <location>
        <position position="101"/>
    </location>
</feature>
<feature type="disulfide bond" evidence="4">
    <location>
        <begin position="25"/>
        <end position="38"/>
    </location>
</feature>
<feature type="disulfide bond" evidence="4">
    <location>
        <begin position="33"/>
        <end position="51"/>
    </location>
</feature>
<feature type="disulfide bond" evidence="4">
    <location>
        <begin position="45"/>
        <end position="60"/>
    </location>
</feature>
<feature type="disulfide bond" evidence="4">
    <location>
        <begin position="67"/>
        <end position="80"/>
    </location>
</feature>
<feature type="disulfide bond" evidence="4">
    <location>
        <begin position="74"/>
        <end position="93"/>
    </location>
</feature>
<feature type="disulfide bond" evidence="4">
    <location>
        <begin position="87"/>
        <end position="102"/>
    </location>
</feature>
<feature type="disulfide bond" evidence="4">
    <location>
        <begin position="109"/>
        <end position="121"/>
    </location>
</feature>
<feature type="disulfide bond" evidence="4">
    <location>
        <begin position="116"/>
        <end position="134"/>
    </location>
</feature>
<feature type="disulfide bond" evidence="4">
    <location>
        <begin position="128"/>
        <end position="143"/>
    </location>
</feature>
<accession>A4IHY6</accession>
<keyword id="KW-1003">Cell membrane</keyword>
<keyword id="KW-1015">Disulfide bond</keyword>
<keyword id="KW-0325">Glycoprotein</keyword>
<keyword id="KW-0449">Lipoprotein</keyword>
<keyword id="KW-0472">Membrane</keyword>
<keyword id="KW-0675">Receptor</keyword>
<keyword id="KW-1185">Reference proteome</keyword>
<keyword id="KW-0677">Repeat</keyword>
<keyword id="KW-0732">Signal</keyword>
<keyword id="KW-0812">Transmembrane</keyword>
<keyword id="KW-1133">Transmembrane helix</keyword>
<evidence type="ECO:0000250" key="1"/>
<evidence type="ECO:0000250" key="2">
    <source>
        <dbReference type="UniProtKB" id="Q86YD5"/>
    </source>
</evidence>
<evidence type="ECO:0000255" key="3"/>
<evidence type="ECO:0000255" key="4">
    <source>
        <dbReference type="PROSITE-ProRule" id="PRU00124"/>
    </source>
</evidence>
<evidence type="ECO:0000256" key="5">
    <source>
        <dbReference type="SAM" id="MobiDB-lite"/>
    </source>
</evidence>
<evidence type="ECO:0000305" key="6"/>
<organism>
    <name type="scientific">Xenopus tropicalis</name>
    <name type="common">Western clawed frog</name>
    <name type="synonym">Silurana tropicalis</name>
    <dbReference type="NCBI Taxonomy" id="8364"/>
    <lineage>
        <taxon>Eukaryota</taxon>
        <taxon>Metazoa</taxon>
        <taxon>Chordata</taxon>
        <taxon>Craniata</taxon>
        <taxon>Vertebrata</taxon>
        <taxon>Euteleostomi</taxon>
        <taxon>Amphibia</taxon>
        <taxon>Batrachia</taxon>
        <taxon>Anura</taxon>
        <taxon>Pipoidea</taxon>
        <taxon>Pipidae</taxon>
        <taxon>Xenopodinae</taxon>
        <taxon>Xenopus</taxon>
        <taxon>Silurana</taxon>
    </lineage>
</organism>
<reference key="1">
    <citation type="submission" date="2007-03" db="EMBL/GenBank/DDBJ databases">
        <authorList>
            <consortium name="NIH - Xenopus Gene Collection (XGC) project"/>
        </authorList>
    </citation>
    <scope>NUCLEOTIDE SEQUENCE [LARGE SCALE MRNA]</scope>
    <source>
        <tissue>Embryo</tissue>
    </source>
</reference>
<comment type="subcellular location">
    <subcellularLocation>
        <location evidence="1">Cell membrane</location>
        <topology evidence="1">Single-pass type I membrane protein</topology>
    </subcellularLocation>
</comment>
<comment type="similarity">
    <text evidence="6">Belongs to the LDLR family.</text>
</comment>
<protein>
    <recommendedName>
        <fullName evidence="2">Low-density lipoprotein receptor class A domain-containing protein 3</fullName>
    </recommendedName>
</protein>
<dbReference type="EMBL" id="BC135753">
    <property type="protein sequence ID" value="AAI35754.1"/>
    <property type="molecule type" value="mRNA"/>
</dbReference>
<dbReference type="RefSeq" id="NP_001096330.1">
    <property type="nucleotide sequence ID" value="NM_001102860.1"/>
</dbReference>
<dbReference type="SMR" id="A4IHY6"/>
<dbReference type="FunCoup" id="A4IHY6">
    <property type="interactions" value="618"/>
</dbReference>
<dbReference type="STRING" id="8364.ENSXETP00000036603"/>
<dbReference type="GlyCosmos" id="A4IHY6">
    <property type="glycosylation" value="2 sites, No reported glycans"/>
</dbReference>
<dbReference type="PaxDb" id="8364-ENSXETP00000047077"/>
<dbReference type="DNASU" id="100124916"/>
<dbReference type="GeneID" id="100124916"/>
<dbReference type="KEGG" id="xtr:100124916"/>
<dbReference type="AGR" id="Xenbase:XB-GENE-989860"/>
<dbReference type="CTD" id="143458"/>
<dbReference type="Xenbase" id="XB-GENE-989860">
    <property type="gene designation" value="ldlrad3"/>
</dbReference>
<dbReference type="eggNOG" id="KOG1215">
    <property type="taxonomic scope" value="Eukaryota"/>
</dbReference>
<dbReference type="InParanoid" id="A4IHY6"/>
<dbReference type="OMA" id="TWQCDGL"/>
<dbReference type="OrthoDB" id="9988974at2759"/>
<dbReference type="Proteomes" id="UP000008143">
    <property type="component" value="Chromosome 4"/>
</dbReference>
<dbReference type="Bgee" id="ENSXETG00000007552">
    <property type="expression patterns" value="Expressed in skeletal muscle tissue and 9 other cell types or tissues"/>
</dbReference>
<dbReference type="GO" id="GO:0005886">
    <property type="term" value="C:plasma membrane"/>
    <property type="evidence" value="ECO:0007669"/>
    <property type="project" value="UniProtKB-SubCell"/>
</dbReference>
<dbReference type="GO" id="GO:0016192">
    <property type="term" value="P:vesicle-mediated transport"/>
    <property type="evidence" value="ECO:0007669"/>
    <property type="project" value="UniProtKB-ARBA"/>
</dbReference>
<dbReference type="CDD" id="cd00112">
    <property type="entry name" value="LDLa"/>
    <property type="match status" value="3"/>
</dbReference>
<dbReference type="FunFam" id="4.10.400.10:FF:000104">
    <property type="entry name" value="Low-density lipoprotein receptor class A domain-containing protein 3"/>
    <property type="match status" value="1"/>
</dbReference>
<dbReference type="Gene3D" id="4.10.400.10">
    <property type="entry name" value="Low-density Lipoprotein Receptor"/>
    <property type="match status" value="3"/>
</dbReference>
<dbReference type="InterPro" id="IPR036055">
    <property type="entry name" value="LDL_receptor-like_sf"/>
</dbReference>
<dbReference type="InterPro" id="IPR050685">
    <property type="entry name" value="LDLR"/>
</dbReference>
<dbReference type="InterPro" id="IPR023415">
    <property type="entry name" value="LDLR_class-A_CS"/>
</dbReference>
<dbReference type="InterPro" id="IPR002172">
    <property type="entry name" value="LDrepeatLR_classA_rpt"/>
</dbReference>
<dbReference type="PANTHER" id="PTHR24270:SF24">
    <property type="entry name" value="LOW-DENSITY LIPOPROTEIN RECEPTOR CLASS A DOMAIN-CONTAINING PROTEIN 3"/>
    <property type="match status" value="1"/>
</dbReference>
<dbReference type="PANTHER" id="PTHR24270">
    <property type="entry name" value="LOW-DENSITY LIPOPROTEIN RECEPTOR-RELATED"/>
    <property type="match status" value="1"/>
</dbReference>
<dbReference type="Pfam" id="PF00057">
    <property type="entry name" value="Ldl_recept_a"/>
    <property type="match status" value="3"/>
</dbReference>
<dbReference type="PRINTS" id="PR00261">
    <property type="entry name" value="LDLRECEPTOR"/>
</dbReference>
<dbReference type="SMART" id="SM00192">
    <property type="entry name" value="LDLa"/>
    <property type="match status" value="3"/>
</dbReference>
<dbReference type="SUPFAM" id="SSF57424">
    <property type="entry name" value="LDL receptor-like module"/>
    <property type="match status" value="3"/>
</dbReference>
<dbReference type="PROSITE" id="PS01209">
    <property type="entry name" value="LDLRA_1"/>
    <property type="match status" value="3"/>
</dbReference>
<dbReference type="PROSITE" id="PS50068">
    <property type="entry name" value="LDLRA_2"/>
    <property type="match status" value="3"/>
</dbReference>
<proteinExistence type="evidence at transcript level"/>
<gene>
    <name evidence="2" type="primary">ldlrad3</name>
</gene>
<sequence>MWLLYLILGSVESQLLPGNNHTTECNIPGNFMCSNGRCIPGGWQCDGNPDCFDESDEKECPRARSRCGPNFFPCTSGIHCIIARFQCNGFEDCPDGSDEENCTAHPLLCSNSRFHCKNHLCIDKSFVCDGQNNCLDNSDEEHCHSPQEPGSEQDYVSSENQLLYYPSITYTIIGSSVIFVLVVALLALVLHHQRKRNLMSLPVHRLQHPLLLSRLVVLDHPHHCRVTYNVNNGIQYMSGQGYQQPVSVESPPSYTEAVLDHSSRPPWFDLPPPPYPSDMESVSQTELPPYRSRTGSSASAGSTEHPRGTPCGTESPTEPQDPTAAPSDDLPSTEVDV</sequence>